<name>RECU_STRP1</name>
<sequence length="199" mass="23000">MVNYPHNLIRQKVSSVQKQNKVDFANRGMSFEAAINATNDYYLSRQIAVIHKKPTPVQIVKVDYPKRSRAKIVEAYFRQASTTDYCGVYKGHYVDFEAKETRQKTAMPMKNFHLHQIEHMACVLHQKGICFVLLHFSTLKETYYLPAQALISFYQIDNGSKSMPIDYIRKNGFKVAFGAFPQVPYLNIIEQNFLGGDYN</sequence>
<gene>
    <name evidence="1" type="primary">recU</name>
    <name type="ordered locus">SPy_1648</name>
    <name type="ordered locus">M5005_Spy1354</name>
</gene>
<protein>
    <recommendedName>
        <fullName evidence="1">Holliday junction resolvase RecU</fullName>
        <ecNumber evidence="1">3.1.21.10</ecNumber>
    </recommendedName>
    <alternativeName>
        <fullName evidence="1">Recombination protein U homolog</fullName>
    </alternativeName>
</protein>
<comment type="function">
    <text evidence="1">Endonuclease that resolves Holliday junction intermediates in genetic recombination. Cleaves mobile four-strand junctions by introducing symmetrical nicks in paired strands. Promotes annealing of linear ssDNA with homologous dsDNA. Required for DNA repair, homologous recombination and chromosome segregation.</text>
</comment>
<comment type="catalytic activity">
    <reaction evidence="1">
        <text>Endonucleolytic cleavage at a junction such as a reciprocal single-stranded crossover between two homologous DNA duplexes (Holliday junction).</text>
        <dbReference type="EC" id="3.1.21.10"/>
    </reaction>
</comment>
<comment type="cofactor">
    <cofactor evidence="1">
        <name>Mg(2+)</name>
        <dbReference type="ChEBI" id="CHEBI:18420"/>
    </cofactor>
    <text evidence="1">Binds 1 Mg(2+) ion per subunit.</text>
</comment>
<comment type="subcellular location">
    <subcellularLocation>
        <location evidence="1">Cytoplasm</location>
    </subcellularLocation>
</comment>
<comment type="similarity">
    <text evidence="1">Belongs to the RecU family.</text>
</comment>
<accession>Q99YL2</accession>
<accession>Q48XF3</accession>
<feature type="chain" id="PRO_0000212314" description="Holliday junction resolvase RecU">
    <location>
        <begin position="1"/>
        <end position="199"/>
    </location>
</feature>
<feature type="binding site" evidence="1">
    <location>
        <position position="82"/>
    </location>
    <ligand>
        <name>Mg(2+)</name>
        <dbReference type="ChEBI" id="CHEBI:18420"/>
    </ligand>
</feature>
<feature type="binding site" evidence="1">
    <location>
        <position position="84"/>
    </location>
    <ligand>
        <name>Mg(2+)</name>
        <dbReference type="ChEBI" id="CHEBI:18420"/>
    </ligand>
</feature>
<feature type="binding site" evidence="1">
    <location>
        <position position="97"/>
    </location>
    <ligand>
        <name>Mg(2+)</name>
        <dbReference type="ChEBI" id="CHEBI:18420"/>
    </ligand>
</feature>
<feature type="binding site" evidence="1">
    <location>
        <position position="116"/>
    </location>
    <ligand>
        <name>Mg(2+)</name>
        <dbReference type="ChEBI" id="CHEBI:18420"/>
    </ligand>
</feature>
<feature type="site" description="Transition state stabilizer" evidence="1">
    <location>
        <position position="99"/>
    </location>
</feature>
<reference key="1">
    <citation type="journal article" date="2001" name="Proc. Natl. Acad. Sci. U.S.A.">
        <title>Complete genome sequence of an M1 strain of Streptococcus pyogenes.</title>
        <authorList>
            <person name="Ferretti J.J."/>
            <person name="McShan W.M."/>
            <person name="Ajdic D.J."/>
            <person name="Savic D.J."/>
            <person name="Savic G."/>
            <person name="Lyon K."/>
            <person name="Primeaux C."/>
            <person name="Sezate S."/>
            <person name="Suvorov A.N."/>
            <person name="Kenton S."/>
            <person name="Lai H.S."/>
            <person name="Lin S.P."/>
            <person name="Qian Y."/>
            <person name="Jia H.G."/>
            <person name="Najar F.Z."/>
            <person name="Ren Q."/>
            <person name="Zhu H."/>
            <person name="Song L."/>
            <person name="White J."/>
            <person name="Yuan X."/>
            <person name="Clifton S.W."/>
            <person name="Roe B.A."/>
            <person name="McLaughlin R.E."/>
        </authorList>
    </citation>
    <scope>NUCLEOTIDE SEQUENCE [LARGE SCALE GENOMIC DNA]</scope>
    <source>
        <strain>ATCC 700294 / SF370 / Serotype M1</strain>
    </source>
</reference>
<reference key="2">
    <citation type="journal article" date="2005" name="J. Infect. Dis.">
        <title>Evolutionary origin and emergence of a highly successful clone of serotype M1 group A Streptococcus involved multiple horizontal gene transfer events.</title>
        <authorList>
            <person name="Sumby P."/>
            <person name="Porcella S.F."/>
            <person name="Madrigal A.G."/>
            <person name="Barbian K.D."/>
            <person name="Virtaneva K."/>
            <person name="Ricklefs S.M."/>
            <person name="Sturdevant D.E."/>
            <person name="Graham M.R."/>
            <person name="Vuopio-Varkila J."/>
            <person name="Hoe N.P."/>
            <person name="Musser J.M."/>
        </authorList>
    </citation>
    <scope>NUCLEOTIDE SEQUENCE [LARGE SCALE GENOMIC DNA]</scope>
    <source>
        <strain>ATCC BAA-947 / MGAS5005 / Serotype M1</strain>
    </source>
</reference>
<keyword id="KW-0963">Cytoplasm</keyword>
<keyword id="KW-0227">DNA damage</keyword>
<keyword id="KW-0233">DNA recombination</keyword>
<keyword id="KW-0234">DNA repair</keyword>
<keyword id="KW-0255">Endonuclease</keyword>
<keyword id="KW-0378">Hydrolase</keyword>
<keyword id="KW-0460">Magnesium</keyword>
<keyword id="KW-0479">Metal-binding</keyword>
<keyword id="KW-0540">Nuclease</keyword>
<keyword id="KW-1185">Reference proteome</keyword>
<dbReference type="EC" id="3.1.21.10" evidence="1"/>
<dbReference type="EMBL" id="AE004092">
    <property type="protein sequence ID" value="AAK34415.1"/>
    <property type="molecule type" value="Genomic_DNA"/>
</dbReference>
<dbReference type="EMBL" id="CP000017">
    <property type="protein sequence ID" value="AAZ51972.1"/>
    <property type="molecule type" value="Genomic_DNA"/>
</dbReference>
<dbReference type="RefSeq" id="NP_269694.1">
    <property type="nucleotide sequence ID" value="NC_002737.2"/>
</dbReference>
<dbReference type="SMR" id="Q99YL2"/>
<dbReference type="PaxDb" id="1314-HKU360_01405"/>
<dbReference type="KEGG" id="spy:SPy_1648"/>
<dbReference type="KEGG" id="spz:M5005_Spy1354"/>
<dbReference type="PATRIC" id="fig|160490.10.peg.1436"/>
<dbReference type="HOGENOM" id="CLU_096340_0_0_9"/>
<dbReference type="OMA" id="VHYPKRS"/>
<dbReference type="Proteomes" id="UP000000750">
    <property type="component" value="Chromosome"/>
</dbReference>
<dbReference type="GO" id="GO:0005737">
    <property type="term" value="C:cytoplasm"/>
    <property type="evidence" value="ECO:0007669"/>
    <property type="project" value="UniProtKB-SubCell"/>
</dbReference>
<dbReference type="GO" id="GO:0004519">
    <property type="term" value="F:endonuclease activity"/>
    <property type="evidence" value="ECO:0007669"/>
    <property type="project" value="UniProtKB-UniRule"/>
</dbReference>
<dbReference type="GO" id="GO:0000287">
    <property type="term" value="F:magnesium ion binding"/>
    <property type="evidence" value="ECO:0007669"/>
    <property type="project" value="UniProtKB-UniRule"/>
</dbReference>
<dbReference type="GO" id="GO:0003676">
    <property type="term" value="F:nucleic acid binding"/>
    <property type="evidence" value="ECO:0007669"/>
    <property type="project" value="InterPro"/>
</dbReference>
<dbReference type="GO" id="GO:0007059">
    <property type="term" value="P:chromosome segregation"/>
    <property type="evidence" value="ECO:0007669"/>
    <property type="project" value="UniProtKB-UniRule"/>
</dbReference>
<dbReference type="GO" id="GO:0006310">
    <property type="term" value="P:DNA recombination"/>
    <property type="evidence" value="ECO:0007669"/>
    <property type="project" value="UniProtKB-UniRule"/>
</dbReference>
<dbReference type="GO" id="GO:0006281">
    <property type="term" value="P:DNA repair"/>
    <property type="evidence" value="ECO:0007669"/>
    <property type="project" value="UniProtKB-UniRule"/>
</dbReference>
<dbReference type="CDD" id="cd22354">
    <property type="entry name" value="RecU-like"/>
    <property type="match status" value="1"/>
</dbReference>
<dbReference type="Gene3D" id="3.40.1350.10">
    <property type="match status" value="1"/>
</dbReference>
<dbReference type="HAMAP" id="MF_00130">
    <property type="entry name" value="RecU"/>
    <property type="match status" value="1"/>
</dbReference>
<dbReference type="InterPro" id="IPR004612">
    <property type="entry name" value="Resolv_RecU"/>
</dbReference>
<dbReference type="InterPro" id="IPR011335">
    <property type="entry name" value="Restrct_endonuc-II-like"/>
</dbReference>
<dbReference type="InterPro" id="IPR011856">
    <property type="entry name" value="tRNA_endonuc-like_dom_sf"/>
</dbReference>
<dbReference type="NCBIfam" id="NF002580">
    <property type="entry name" value="PRK02234.1-1"/>
    <property type="match status" value="1"/>
</dbReference>
<dbReference type="NCBIfam" id="NF002584">
    <property type="entry name" value="PRK02234.1-5"/>
    <property type="match status" value="1"/>
</dbReference>
<dbReference type="NCBIfam" id="TIGR00648">
    <property type="entry name" value="recU"/>
    <property type="match status" value="1"/>
</dbReference>
<dbReference type="Pfam" id="PF03838">
    <property type="entry name" value="RecU"/>
    <property type="match status" value="1"/>
</dbReference>
<dbReference type="PIRSF" id="PIRSF037785">
    <property type="entry name" value="RecU"/>
    <property type="match status" value="1"/>
</dbReference>
<dbReference type="SUPFAM" id="SSF52980">
    <property type="entry name" value="Restriction endonuclease-like"/>
    <property type="match status" value="1"/>
</dbReference>
<proteinExistence type="inferred from homology"/>
<evidence type="ECO:0000255" key="1">
    <source>
        <dbReference type="HAMAP-Rule" id="MF_00130"/>
    </source>
</evidence>
<organism>
    <name type="scientific">Streptococcus pyogenes serotype M1</name>
    <dbReference type="NCBI Taxonomy" id="301447"/>
    <lineage>
        <taxon>Bacteria</taxon>
        <taxon>Bacillati</taxon>
        <taxon>Bacillota</taxon>
        <taxon>Bacilli</taxon>
        <taxon>Lactobacillales</taxon>
        <taxon>Streptococcaceae</taxon>
        <taxon>Streptococcus</taxon>
    </lineage>
</organism>